<name>NADE_METJA</name>
<sequence>MLWGESMEEIVNKITKFIREKVEEANANGVVVGLSGGIDSSVTAYLCVKALGKDKVLGLIMPEKNTNPKDVEHAKMVAENLGIKYIISDITDILKAFGAGGYVPTREFDKIADGNLKARIRMCILYYFANKYNLLVAGTSNKSEIYVGYGTKHGDIACDIRPIGNLFKTEVKKLAKYIGVPKEIIEKPPSAGLWEGQTDEEELDIKYETLDTILKLYEKGKTPEEIHKETNIPLETINYVFDLIKKNEHKRTLPPTPEI</sequence>
<gene>
    <name evidence="1" type="primary">nadE</name>
    <name type="ordered locus">MJ1352</name>
</gene>
<accession>Q58747</accession>
<organism>
    <name type="scientific">Methanocaldococcus jannaschii (strain ATCC 43067 / DSM 2661 / JAL-1 / JCM 10045 / NBRC 100440)</name>
    <name type="common">Methanococcus jannaschii</name>
    <dbReference type="NCBI Taxonomy" id="243232"/>
    <lineage>
        <taxon>Archaea</taxon>
        <taxon>Methanobacteriati</taxon>
        <taxon>Methanobacteriota</taxon>
        <taxon>Methanomada group</taxon>
        <taxon>Methanococci</taxon>
        <taxon>Methanococcales</taxon>
        <taxon>Methanocaldococcaceae</taxon>
        <taxon>Methanocaldococcus</taxon>
    </lineage>
</organism>
<reference key="1">
    <citation type="journal article" date="1996" name="Science">
        <title>Complete genome sequence of the methanogenic archaeon, Methanococcus jannaschii.</title>
        <authorList>
            <person name="Bult C.J."/>
            <person name="White O."/>
            <person name="Olsen G.J."/>
            <person name="Zhou L."/>
            <person name="Fleischmann R.D."/>
            <person name="Sutton G.G."/>
            <person name="Blake J.A."/>
            <person name="FitzGerald L.M."/>
            <person name="Clayton R.A."/>
            <person name="Gocayne J.D."/>
            <person name="Kerlavage A.R."/>
            <person name="Dougherty B.A."/>
            <person name="Tomb J.-F."/>
            <person name="Adams M.D."/>
            <person name="Reich C.I."/>
            <person name="Overbeek R."/>
            <person name="Kirkness E.F."/>
            <person name="Weinstock K.G."/>
            <person name="Merrick J.M."/>
            <person name="Glodek A."/>
            <person name="Scott J.L."/>
            <person name="Geoghagen N.S.M."/>
            <person name="Weidman J.F."/>
            <person name="Fuhrmann J.L."/>
            <person name="Nguyen D."/>
            <person name="Utterback T.R."/>
            <person name="Kelley J.M."/>
            <person name="Peterson J.D."/>
            <person name="Sadow P.W."/>
            <person name="Hanna M.C."/>
            <person name="Cotton M.D."/>
            <person name="Roberts K.M."/>
            <person name="Hurst M.A."/>
            <person name="Kaine B.P."/>
            <person name="Borodovsky M."/>
            <person name="Klenk H.-P."/>
            <person name="Fraser C.M."/>
            <person name="Smith H.O."/>
            <person name="Woese C.R."/>
            <person name="Venter J.C."/>
        </authorList>
    </citation>
    <scope>NUCLEOTIDE SEQUENCE [LARGE SCALE GENOMIC DNA]</scope>
    <source>
        <strain>ATCC 43067 / DSM 2661 / JAL-1 / JCM 10045 / NBRC 100440</strain>
    </source>
</reference>
<proteinExistence type="inferred from homology"/>
<feature type="chain" id="PRO_0000152224" description="NH(3)-dependent NAD(+) synthetase">
    <location>
        <begin position="1"/>
        <end position="259"/>
    </location>
</feature>
<feature type="binding site" evidence="1">
    <location>
        <begin position="33"/>
        <end position="40"/>
    </location>
    <ligand>
        <name>ATP</name>
        <dbReference type="ChEBI" id="CHEBI:30616"/>
    </ligand>
</feature>
<feature type="binding site" evidence="1">
    <location>
        <position position="39"/>
    </location>
    <ligand>
        <name>Mg(2+)</name>
        <dbReference type="ChEBI" id="CHEBI:18420"/>
    </ligand>
</feature>
<feature type="binding site" evidence="1">
    <location>
        <position position="119"/>
    </location>
    <ligand>
        <name>deamido-NAD(+)</name>
        <dbReference type="ChEBI" id="CHEBI:58437"/>
    </ligand>
</feature>
<feature type="binding site" evidence="1">
    <location>
        <position position="139"/>
    </location>
    <ligand>
        <name>ATP</name>
        <dbReference type="ChEBI" id="CHEBI:30616"/>
    </ligand>
</feature>
<feature type="binding site" evidence="1">
    <location>
        <position position="144"/>
    </location>
    <ligand>
        <name>Mg(2+)</name>
        <dbReference type="ChEBI" id="CHEBI:18420"/>
    </ligand>
</feature>
<feature type="binding site" evidence="1">
    <location>
        <position position="152"/>
    </location>
    <ligand>
        <name>deamido-NAD(+)</name>
        <dbReference type="ChEBI" id="CHEBI:58437"/>
    </ligand>
</feature>
<feature type="binding site" evidence="1">
    <location>
        <position position="159"/>
    </location>
    <ligand>
        <name>deamido-NAD(+)</name>
        <dbReference type="ChEBI" id="CHEBI:58437"/>
    </ligand>
</feature>
<feature type="binding site" evidence="1">
    <location>
        <position position="168"/>
    </location>
    <ligand>
        <name>ATP</name>
        <dbReference type="ChEBI" id="CHEBI:30616"/>
    </ligand>
</feature>
<feature type="binding site" evidence="1">
    <location>
        <position position="190"/>
    </location>
    <ligand>
        <name>ATP</name>
        <dbReference type="ChEBI" id="CHEBI:30616"/>
    </ligand>
</feature>
<feature type="binding site" evidence="1">
    <location>
        <begin position="249"/>
        <end position="250"/>
    </location>
    <ligand>
        <name>deamido-NAD(+)</name>
        <dbReference type="ChEBI" id="CHEBI:58437"/>
    </ligand>
</feature>
<dbReference type="EC" id="6.3.1.5" evidence="1"/>
<dbReference type="EMBL" id="L77117">
    <property type="protein sequence ID" value="AAB99363.1"/>
    <property type="molecule type" value="Genomic_DNA"/>
</dbReference>
<dbReference type="PIR" id="G64468">
    <property type="entry name" value="G64468"/>
</dbReference>
<dbReference type="SMR" id="Q58747"/>
<dbReference type="FunCoup" id="Q58747">
    <property type="interactions" value="112"/>
</dbReference>
<dbReference type="STRING" id="243232.MJ_1352"/>
<dbReference type="PaxDb" id="243232-MJ_1352"/>
<dbReference type="EnsemblBacteria" id="AAB99363">
    <property type="protein sequence ID" value="AAB99363"/>
    <property type="gene ID" value="MJ_1352"/>
</dbReference>
<dbReference type="KEGG" id="mja:MJ_1352"/>
<dbReference type="eggNOG" id="arCOG00069">
    <property type="taxonomic scope" value="Archaea"/>
</dbReference>
<dbReference type="HOGENOM" id="CLU_059327_1_1_2"/>
<dbReference type="InParanoid" id="Q58747"/>
<dbReference type="PhylomeDB" id="Q58747"/>
<dbReference type="BRENDA" id="6.3.1.5">
    <property type="organism ID" value="3260"/>
</dbReference>
<dbReference type="UniPathway" id="UPA00253">
    <property type="reaction ID" value="UER00333"/>
</dbReference>
<dbReference type="Proteomes" id="UP000000805">
    <property type="component" value="Chromosome"/>
</dbReference>
<dbReference type="GO" id="GO:0005737">
    <property type="term" value="C:cytoplasm"/>
    <property type="evidence" value="ECO:0000318"/>
    <property type="project" value="GO_Central"/>
</dbReference>
<dbReference type="GO" id="GO:0005524">
    <property type="term" value="F:ATP binding"/>
    <property type="evidence" value="ECO:0007669"/>
    <property type="project" value="UniProtKB-UniRule"/>
</dbReference>
<dbReference type="GO" id="GO:0004359">
    <property type="term" value="F:glutaminase activity"/>
    <property type="evidence" value="ECO:0007669"/>
    <property type="project" value="InterPro"/>
</dbReference>
<dbReference type="GO" id="GO:0046872">
    <property type="term" value="F:metal ion binding"/>
    <property type="evidence" value="ECO:0007669"/>
    <property type="project" value="UniProtKB-KW"/>
</dbReference>
<dbReference type="GO" id="GO:0003952">
    <property type="term" value="F:NAD+ synthase (glutamine-hydrolyzing) activity"/>
    <property type="evidence" value="ECO:0007669"/>
    <property type="project" value="InterPro"/>
</dbReference>
<dbReference type="GO" id="GO:0008795">
    <property type="term" value="F:NAD+ synthase activity"/>
    <property type="evidence" value="ECO:0007669"/>
    <property type="project" value="UniProtKB-UniRule"/>
</dbReference>
<dbReference type="GO" id="GO:0009435">
    <property type="term" value="P:NAD biosynthetic process"/>
    <property type="evidence" value="ECO:0000318"/>
    <property type="project" value="GO_Central"/>
</dbReference>
<dbReference type="CDD" id="cd00553">
    <property type="entry name" value="NAD_synthase"/>
    <property type="match status" value="1"/>
</dbReference>
<dbReference type="FunFam" id="3.40.50.620:FF:000106">
    <property type="entry name" value="Glutamine-dependent NAD(+) synthetase"/>
    <property type="match status" value="1"/>
</dbReference>
<dbReference type="Gene3D" id="3.40.50.620">
    <property type="entry name" value="HUPs"/>
    <property type="match status" value="1"/>
</dbReference>
<dbReference type="HAMAP" id="MF_00193">
    <property type="entry name" value="NadE_ammonia_dep"/>
    <property type="match status" value="1"/>
</dbReference>
<dbReference type="InterPro" id="IPR022310">
    <property type="entry name" value="NAD/GMP_synthase"/>
</dbReference>
<dbReference type="InterPro" id="IPR003694">
    <property type="entry name" value="NAD_synthase"/>
</dbReference>
<dbReference type="InterPro" id="IPR022926">
    <property type="entry name" value="NH(3)-dep_NAD(+)_synth"/>
</dbReference>
<dbReference type="InterPro" id="IPR014729">
    <property type="entry name" value="Rossmann-like_a/b/a_fold"/>
</dbReference>
<dbReference type="NCBIfam" id="TIGR00552">
    <property type="entry name" value="nadE"/>
    <property type="match status" value="1"/>
</dbReference>
<dbReference type="NCBIfam" id="NF010587">
    <property type="entry name" value="PRK13980.1"/>
    <property type="match status" value="1"/>
</dbReference>
<dbReference type="PANTHER" id="PTHR23090:SF9">
    <property type="entry name" value="GLUTAMINE-DEPENDENT NAD(+) SYNTHETASE"/>
    <property type="match status" value="1"/>
</dbReference>
<dbReference type="PANTHER" id="PTHR23090">
    <property type="entry name" value="NH 3 /GLUTAMINE-DEPENDENT NAD + SYNTHETASE"/>
    <property type="match status" value="1"/>
</dbReference>
<dbReference type="Pfam" id="PF02540">
    <property type="entry name" value="NAD_synthase"/>
    <property type="match status" value="1"/>
</dbReference>
<dbReference type="SUPFAM" id="SSF52402">
    <property type="entry name" value="Adenine nucleotide alpha hydrolases-like"/>
    <property type="match status" value="1"/>
</dbReference>
<comment type="function">
    <text evidence="1">Catalyzes the ATP-dependent amidation of deamido-NAD to form NAD. Uses ammonia as a nitrogen source.</text>
</comment>
<comment type="catalytic activity">
    <reaction evidence="1">
        <text>deamido-NAD(+) + NH4(+) + ATP = AMP + diphosphate + NAD(+) + H(+)</text>
        <dbReference type="Rhea" id="RHEA:21188"/>
        <dbReference type="ChEBI" id="CHEBI:15378"/>
        <dbReference type="ChEBI" id="CHEBI:28938"/>
        <dbReference type="ChEBI" id="CHEBI:30616"/>
        <dbReference type="ChEBI" id="CHEBI:33019"/>
        <dbReference type="ChEBI" id="CHEBI:57540"/>
        <dbReference type="ChEBI" id="CHEBI:58437"/>
        <dbReference type="ChEBI" id="CHEBI:456215"/>
        <dbReference type="EC" id="6.3.1.5"/>
    </reaction>
</comment>
<comment type="pathway">
    <text evidence="1">Cofactor biosynthesis; NAD(+) biosynthesis; NAD(+) from deamido-NAD(+) (ammonia route): step 1/1.</text>
</comment>
<comment type="subunit">
    <text evidence="1">Homodimer.</text>
</comment>
<comment type="similarity">
    <text evidence="1 2">Belongs to the NAD synthetase family.</text>
</comment>
<evidence type="ECO:0000255" key="1">
    <source>
        <dbReference type="HAMAP-Rule" id="MF_00193"/>
    </source>
</evidence>
<evidence type="ECO:0000305" key="2"/>
<keyword id="KW-0067">ATP-binding</keyword>
<keyword id="KW-0436">Ligase</keyword>
<keyword id="KW-0460">Magnesium</keyword>
<keyword id="KW-0479">Metal-binding</keyword>
<keyword id="KW-0520">NAD</keyword>
<keyword id="KW-0547">Nucleotide-binding</keyword>
<keyword id="KW-1185">Reference proteome</keyword>
<protein>
    <recommendedName>
        <fullName evidence="1">NH(3)-dependent NAD(+) synthetase</fullName>
        <ecNumber evidence="1">6.3.1.5</ecNumber>
    </recommendedName>
</protein>